<organism>
    <name type="scientific">Staphylococcus aureus (strain Newman)</name>
    <dbReference type="NCBI Taxonomy" id="426430"/>
    <lineage>
        <taxon>Bacteria</taxon>
        <taxon>Bacillati</taxon>
        <taxon>Bacillota</taxon>
        <taxon>Bacilli</taxon>
        <taxon>Bacillales</taxon>
        <taxon>Staphylococcaceae</taxon>
        <taxon>Staphylococcus</taxon>
    </lineage>
</organism>
<comment type="function">
    <text evidence="1">Displays ATPase and GTPase activities.</text>
</comment>
<comment type="similarity">
    <text evidence="1">Belongs to the RapZ-like family.</text>
</comment>
<name>Y733_STAAE</name>
<gene>
    <name type="ordered locus">NWMN_0733</name>
</gene>
<feature type="chain" id="PRO_1000072678" description="Nucleotide-binding protein NWMN_0733">
    <location>
        <begin position="1"/>
        <end position="303"/>
    </location>
</feature>
<feature type="binding site" evidence="1">
    <location>
        <begin position="18"/>
        <end position="25"/>
    </location>
    <ligand>
        <name>ATP</name>
        <dbReference type="ChEBI" id="CHEBI:30616"/>
    </ligand>
</feature>
<feature type="binding site" evidence="1">
    <location>
        <begin position="69"/>
        <end position="72"/>
    </location>
    <ligand>
        <name>GTP</name>
        <dbReference type="ChEBI" id="CHEBI:37565"/>
    </ligand>
</feature>
<dbReference type="EMBL" id="AP009351">
    <property type="protein sequence ID" value="BAF67005.1"/>
    <property type="molecule type" value="Genomic_DNA"/>
</dbReference>
<dbReference type="SMR" id="A6QF73"/>
<dbReference type="KEGG" id="sae:NWMN_0733"/>
<dbReference type="HOGENOM" id="CLU_059558_0_0_9"/>
<dbReference type="Proteomes" id="UP000006386">
    <property type="component" value="Chromosome"/>
</dbReference>
<dbReference type="GO" id="GO:0005524">
    <property type="term" value="F:ATP binding"/>
    <property type="evidence" value="ECO:0007669"/>
    <property type="project" value="UniProtKB-UniRule"/>
</dbReference>
<dbReference type="GO" id="GO:0005525">
    <property type="term" value="F:GTP binding"/>
    <property type="evidence" value="ECO:0007669"/>
    <property type="project" value="UniProtKB-UniRule"/>
</dbReference>
<dbReference type="Gene3D" id="3.40.50.300">
    <property type="entry name" value="P-loop containing nucleotide triphosphate hydrolases"/>
    <property type="match status" value="1"/>
</dbReference>
<dbReference type="HAMAP" id="MF_00636">
    <property type="entry name" value="RapZ_like"/>
    <property type="match status" value="1"/>
</dbReference>
<dbReference type="InterPro" id="IPR027417">
    <property type="entry name" value="P-loop_NTPase"/>
</dbReference>
<dbReference type="InterPro" id="IPR005337">
    <property type="entry name" value="RapZ-like"/>
</dbReference>
<dbReference type="InterPro" id="IPR053930">
    <property type="entry name" value="RapZ-like_N"/>
</dbReference>
<dbReference type="InterPro" id="IPR053931">
    <property type="entry name" value="RapZ_C"/>
</dbReference>
<dbReference type="NCBIfam" id="NF003828">
    <property type="entry name" value="PRK05416.1"/>
    <property type="match status" value="1"/>
</dbReference>
<dbReference type="PANTHER" id="PTHR30448">
    <property type="entry name" value="RNASE ADAPTER PROTEIN RAPZ"/>
    <property type="match status" value="1"/>
</dbReference>
<dbReference type="PANTHER" id="PTHR30448:SF0">
    <property type="entry name" value="RNASE ADAPTER PROTEIN RAPZ"/>
    <property type="match status" value="1"/>
</dbReference>
<dbReference type="Pfam" id="PF22740">
    <property type="entry name" value="PapZ_C"/>
    <property type="match status" value="1"/>
</dbReference>
<dbReference type="Pfam" id="PF03668">
    <property type="entry name" value="RapZ-like_N"/>
    <property type="match status" value="1"/>
</dbReference>
<dbReference type="PIRSF" id="PIRSF005052">
    <property type="entry name" value="P-loopkin"/>
    <property type="match status" value="1"/>
</dbReference>
<dbReference type="SUPFAM" id="SSF52540">
    <property type="entry name" value="P-loop containing nucleoside triphosphate hydrolases"/>
    <property type="match status" value="1"/>
</dbReference>
<evidence type="ECO:0000255" key="1">
    <source>
        <dbReference type="HAMAP-Rule" id="MF_00636"/>
    </source>
</evidence>
<reference key="1">
    <citation type="journal article" date="2008" name="J. Bacteriol.">
        <title>Genome sequence of Staphylococcus aureus strain Newman and comparative analysis of staphylococcal genomes: polymorphism and evolution of two major pathogenicity islands.</title>
        <authorList>
            <person name="Baba T."/>
            <person name="Bae T."/>
            <person name="Schneewind O."/>
            <person name="Takeuchi F."/>
            <person name="Hiramatsu K."/>
        </authorList>
    </citation>
    <scope>NUCLEOTIDE SEQUENCE [LARGE SCALE GENOMIC DNA]</scope>
    <source>
        <strain>Newman</strain>
    </source>
</reference>
<accession>A6QF73</accession>
<keyword id="KW-0067">ATP-binding</keyword>
<keyword id="KW-0342">GTP-binding</keyword>
<keyword id="KW-0547">Nucleotide-binding</keyword>
<proteinExistence type="inferred from homology"/>
<protein>
    <recommendedName>
        <fullName evidence="1">Nucleotide-binding protein NWMN_0733</fullName>
    </recommendedName>
</protein>
<sequence>MDNNEKEKSKSELLVVTGLSGAGKSLVIQCLEDMGYFCVDNLPPVLLPKFVELMEQGNPSLRKVAIAIDLRGKELFNSLVAVVDKVKSESDVIIDVMFLEASTEKLISRYKETRRAHPLMEQGKRSLINAINDEREHLSQIRSIANFVIDTTKLSPKELKERIRRYYEDEEFETFTINVTSFGFKHGIQMDADLVFDVRFLPNPYYVVDLRPLTGLDKDVYNYVMKWKETEIFFEKLTDLLDFMIPGYKKEGKSQLVIAIGCTGGQHRSVALAERLGNYLNEVFEYNVYVHHRDAHIESGEKK</sequence>